<name>Y1919_KOSOT</name>
<reference key="1">
    <citation type="submission" date="2009-06" db="EMBL/GenBank/DDBJ databases">
        <title>Complete sequence of Thermotogales bacterium TBF 19.5.1.</title>
        <authorList>
            <consortium name="US DOE Joint Genome Institute"/>
            <person name="Lucas S."/>
            <person name="Copeland A."/>
            <person name="Lapidus A."/>
            <person name="Glavina del Rio T."/>
            <person name="Tice H."/>
            <person name="Bruce D."/>
            <person name="Goodwin L."/>
            <person name="Pitluck S."/>
            <person name="Chertkov O."/>
            <person name="Brettin T."/>
            <person name="Detter J.C."/>
            <person name="Han C."/>
            <person name="Schmutz J."/>
            <person name="Larimer F."/>
            <person name="Land M."/>
            <person name="Hauser L."/>
            <person name="Kyrpides N."/>
            <person name="Ovchinnikova G."/>
            <person name="Noll K."/>
        </authorList>
    </citation>
    <scope>NUCLEOTIDE SEQUENCE [LARGE SCALE GENOMIC DNA]</scope>
    <source>
        <strain>ATCC BAA-1733 / DSM 21960 / TBF 19.5.1</strain>
    </source>
</reference>
<keyword id="KW-1185">Reference proteome</keyword>
<gene>
    <name type="ordered locus">Kole_1919</name>
</gene>
<sequence>MDDMSLKKGKEFEERASKFLKKQGYKILARNVRYSFGELDIVARKGKTLVFVEVKGGNPDFPPRMRVDRAKLRRLELAAYKYIKDFSPKFEESRLDVIEVLSNGEINHLKGVGRW</sequence>
<dbReference type="EMBL" id="CP001634">
    <property type="protein sequence ID" value="ACR80600.1"/>
    <property type="molecule type" value="Genomic_DNA"/>
</dbReference>
<dbReference type="SMR" id="C5CGT1"/>
<dbReference type="STRING" id="521045.Kole_1919"/>
<dbReference type="KEGG" id="kol:Kole_1919"/>
<dbReference type="eggNOG" id="COG0792">
    <property type="taxonomic scope" value="Bacteria"/>
</dbReference>
<dbReference type="HOGENOM" id="CLU_115353_3_1_0"/>
<dbReference type="Proteomes" id="UP000002382">
    <property type="component" value="Chromosome"/>
</dbReference>
<dbReference type="GO" id="GO:0003676">
    <property type="term" value="F:nucleic acid binding"/>
    <property type="evidence" value="ECO:0007669"/>
    <property type="project" value="InterPro"/>
</dbReference>
<dbReference type="CDD" id="cd20736">
    <property type="entry name" value="PoNe_Nuclease"/>
    <property type="match status" value="1"/>
</dbReference>
<dbReference type="Gene3D" id="3.40.1350.10">
    <property type="match status" value="1"/>
</dbReference>
<dbReference type="HAMAP" id="MF_00048">
    <property type="entry name" value="UPF0102"/>
    <property type="match status" value="1"/>
</dbReference>
<dbReference type="InterPro" id="IPR011335">
    <property type="entry name" value="Restrct_endonuc-II-like"/>
</dbReference>
<dbReference type="InterPro" id="IPR011856">
    <property type="entry name" value="tRNA_endonuc-like_dom_sf"/>
</dbReference>
<dbReference type="InterPro" id="IPR003509">
    <property type="entry name" value="UPF0102_YraN-like"/>
</dbReference>
<dbReference type="PANTHER" id="PTHR34039">
    <property type="entry name" value="UPF0102 PROTEIN YRAN"/>
    <property type="match status" value="1"/>
</dbReference>
<dbReference type="PANTHER" id="PTHR34039:SF1">
    <property type="entry name" value="UPF0102 PROTEIN YRAN"/>
    <property type="match status" value="1"/>
</dbReference>
<dbReference type="Pfam" id="PF02021">
    <property type="entry name" value="UPF0102"/>
    <property type="match status" value="1"/>
</dbReference>
<dbReference type="SUPFAM" id="SSF52980">
    <property type="entry name" value="Restriction endonuclease-like"/>
    <property type="match status" value="1"/>
</dbReference>
<proteinExistence type="inferred from homology"/>
<evidence type="ECO:0000255" key="1">
    <source>
        <dbReference type="HAMAP-Rule" id="MF_00048"/>
    </source>
</evidence>
<feature type="chain" id="PRO_1000202214" description="UPF0102 protein Kole_1919">
    <location>
        <begin position="1"/>
        <end position="115"/>
    </location>
</feature>
<accession>C5CGT1</accession>
<protein>
    <recommendedName>
        <fullName evidence="1">UPF0102 protein Kole_1919</fullName>
    </recommendedName>
</protein>
<organism>
    <name type="scientific">Kosmotoga olearia (strain ATCC BAA-1733 / DSM 21960 / TBF 19.5.1)</name>
    <dbReference type="NCBI Taxonomy" id="521045"/>
    <lineage>
        <taxon>Bacteria</taxon>
        <taxon>Thermotogati</taxon>
        <taxon>Thermotogota</taxon>
        <taxon>Thermotogae</taxon>
        <taxon>Kosmotogales</taxon>
        <taxon>Kosmotogaceae</taxon>
        <taxon>Kosmotoga</taxon>
    </lineage>
</organism>
<comment type="similarity">
    <text evidence="1">Belongs to the UPF0102 family.</text>
</comment>